<protein>
    <recommendedName>
        <fullName evidence="1">Phosphoglycolate phosphatase</fullName>
        <shortName evidence="1">PGP</shortName>
        <shortName evidence="1">PGPase</shortName>
        <ecNumber evidence="1">3.1.3.18</ecNumber>
    </recommendedName>
</protein>
<sequence>MTQQDIKLIAFDLDGTLLDSVPDLAVAADQAVQALGYPAVSEEQVRDYVGNGADVLIGRALSQSMTISSDLSEDLRAKGRELFDDFYAQSGHQLSHLYPTVKETLEELHQAGFTMALVTNKPSKFVPEILEQHGIAKYFVDVLGGDAFPEKKPNPVALNWLMEKHQVKASEMLMVGDSKNDILAAKNAGCASFGLTYGYNHGEPISASNPDFVADSLSELLEVVAVSA</sequence>
<dbReference type="EC" id="3.1.3.18" evidence="1"/>
<dbReference type="EMBL" id="BA000031">
    <property type="protein sequence ID" value="BAC61068.1"/>
    <property type="molecule type" value="Genomic_DNA"/>
</dbReference>
<dbReference type="RefSeq" id="NP_799184.1">
    <property type="nucleotide sequence ID" value="NC_004603.1"/>
</dbReference>
<dbReference type="RefSeq" id="WP_005480027.1">
    <property type="nucleotide sequence ID" value="NC_004603.1"/>
</dbReference>
<dbReference type="SMR" id="Q87L12"/>
<dbReference type="GeneID" id="1190355"/>
<dbReference type="KEGG" id="vpa:VP2805"/>
<dbReference type="PATRIC" id="fig|223926.6.peg.2697"/>
<dbReference type="eggNOG" id="COG0546">
    <property type="taxonomic scope" value="Bacteria"/>
</dbReference>
<dbReference type="HOGENOM" id="CLU_045011_19_1_6"/>
<dbReference type="UniPathway" id="UPA00865">
    <property type="reaction ID" value="UER00834"/>
</dbReference>
<dbReference type="Proteomes" id="UP000002493">
    <property type="component" value="Chromosome 1"/>
</dbReference>
<dbReference type="GO" id="GO:0005829">
    <property type="term" value="C:cytosol"/>
    <property type="evidence" value="ECO:0007669"/>
    <property type="project" value="TreeGrafter"/>
</dbReference>
<dbReference type="GO" id="GO:0046872">
    <property type="term" value="F:metal ion binding"/>
    <property type="evidence" value="ECO:0007669"/>
    <property type="project" value="UniProtKB-KW"/>
</dbReference>
<dbReference type="GO" id="GO:0008967">
    <property type="term" value="F:phosphoglycolate phosphatase activity"/>
    <property type="evidence" value="ECO:0007669"/>
    <property type="project" value="UniProtKB-UniRule"/>
</dbReference>
<dbReference type="GO" id="GO:0005975">
    <property type="term" value="P:carbohydrate metabolic process"/>
    <property type="evidence" value="ECO:0007669"/>
    <property type="project" value="InterPro"/>
</dbReference>
<dbReference type="GO" id="GO:0006281">
    <property type="term" value="P:DNA repair"/>
    <property type="evidence" value="ECO:0007669"/>
    <property type="project" value="TreeGrafter"/>
</dbReference>
<dbReference type="GO" id="GO:0046295">
    <property type="term" value="P:glycolate biosynthetic process"/>
    <property type="evidence" value="ECO:0007669"/>
    <property type="project" value="UniProtKB-UniRule"/>
</dbReference>
<dbReference type="CDD" id="cd16417">
    <property type="entry name" value="HAD_PGPase"/>
    <property type="match status" value="1"/>
</dbReference>
<dbReference type="FunFam" id="3.40.50.1000:FF:000022">
    <property type="entry name" value="Phosphoglycolate phosphatase"/>
    <property type="match status" value="1"/>
</dbReference>
<dbReference type="Gene3D" id="3.40.50.1000">
    <property type="entry name" value="HAD superfamily/HAD-like"/>
    <property type="match status" value="1"/>
</dbReference>
<dbReference type="Gene3D" id="1.10.150.240">
    <property type="entry name" value="Putative phosphatase, domain 2"/>
    <property type="match status" value="1"/>
</dbReference>
<dbReference type="HAMAP" id="MF_00495">
    <property type="entry name" value="GPH_hydrolase_bact"/>
    <property type="match status" value="1"/>
</dbReference>
<dbReference type="InterPro" id="IPR050155">
    <property type="entry name" value="HAD-like_hydrolase_sf"/>
</dbReference>
<dbReference type="InterPro" id="IPR036412">
    <property type="entry name" value="HAD-like_sf"/>
</dbReference>
<dbReference type="InterPro" id="IPR006439">
    <property type="entry name" value="HAD-SF_hydro_IA"/>
</dbReference>
<dbReference type="InterPro" id="IPR006549">
    <property type="entry name" value="HAD-SF_hydro_IIIA"/>
</dbReference>
<dbReference type="InterPro" id="IPR041492">
    <property type="entry name" value="HAD_2"/>
</dbReference>
<dbReference type="InterPro" id="IPR023214">
    <property type="entry name" value="HAD_sf"/>
</dbReference>
<dbReference type="InterPro" id="IPR023198">
    <property type="entry name" value="PGP-like_dom2"/>
</dbReference>
<dbReference type="InterPro" id="IPR037512">
    <property type="entry name" value="PGPase_prok"/>
</dbReference>
<dbReference type="NCBIfam" id="TIGR01549">
    <property type="entry name" value="HAD-SF-IA-v1"/>
    <property type="match status" value="1"/>
</dbReference>
<dbReference type="NCBIfam" id="TIGR01509">
    <property type="entry name" value="HAD-SF-IA-v3"/>
    <property type="match status" value="1"/>
</dbReference>
<dbReference type="NCBIfam" id="TIGR01662">
    <property type="entry name" value="HAD-SF-IIIA"/>
    <property type="match status" value="1"/>
</dbReference>
<dbReference type="NCBIfam" id="TIGR01449">
    <property type="entry name" value="PGP_bact"/>
    <property type="match status" value="1"/>
</dbReference>
<dbReference type="NCBIfam" id="NF009695">
    <property type="entry name" value="PRK13222.1-2"/>
    <property type="match status" value="1"/>
</dbReference>
<dbReference type="PANTHER" id="PTHR43434">
    <property type="entry name" value="PHOSPHOGLYCOLATE PHOSPHATASE"/>
    <property type="match status" value="1"/>
</dbReference>
<dbReference type="PANTHER" id="PTHR43434:SF1">
    <property type="entry name" value="PHOSPHOGLYCOLATE PHOSPHATASE"/>
    <property type="match status" value="1"/>
</dbReference>
<dbReference type="Pfam" id="PF13419">
    <property type="entry name" value="HAD_2"/>
    <property type="match status" value="1"/>
</dbReference>
<dbReference type="SFLD" id="SFLDG01135">
    <property type="entry name" value="C1.5.6:_HAD__Beta-PGM__Phospha"/>
    <property type="match status" value="1"/>
</dbReference>
<dbReference type="SFLD" id="SFLDG01129">
    <property type="entry name" value="C1.5:_HAD__Beta-PGM__Phosphata"/>
    <property type="match status" value="1"/>
</dbReference>
<dbReference type="SUPFAM" id="SSF56784">
    <property type="entry name" value="HAD-like"/>
    <property type="match status" value="1"/>
</dbReference>
<feature type="chain" id="PRO_0000108044" description="Phosphoglycolate phosphatase">
    <location>
        <begin position="1"/>
        <end position="228"/>
    </location>
</feature>
<feature type="active site" description="Nucleophile" evidence="1">
    <location>
        <position position="12"/>
    </location>
</feature>
<feature type="binding site" evidence="1">
    <location>
        <position position="12"/>
    </location>
    <ligand>
        <name>Mg(2+)</name>
        <dbReference type="ChEBI" id="CHEBI:18420"/>
    </ligand>
</feature>
<feature type="binding site" evidence="1">
    <location>
        <position position="14"/>
    </location>
    <ligand>
        <name>Mg(2+)</name>
        <dbReference type="ChEBI" id="CHEBI:18420"/>
    </ligand>
</feature>
<feature type="binding site" evidence="1">
    <location>
        <position position="177"/>
    </location>
    <ligand>
        <name>Mg(2+)</name>
        <dbReference type="ChEBI" id="CHEBI:18420"/>
    </ligand>
</feature>
<comment type="function">
    <text evidence="1">Specifically catalyzes the dephosphorylation of 2-phosphoglycolate. Is involved in the dissimilation of the intracellular 2-phosphoglycolate formed during the DNA repair of 3'-phosphoglycolate ends, a major class of DNA lesions induced by oxidative stress.</text>
</comment>
<comment type="catalytic activity">
    <reaction evidence="1">
        <text>2-phosphoglycolate + H2O = glycolate + phosphate</text>
        <dbReference type="Rhea" id="RHEA:14369"/>
        <dbReference type="ChEBI" id="CHEBI:15377"/>
        <dbReference type="ChEBI" id="CHEBI:29805"/>
        <dbReference type="ChEBI" id="CHEBI:43474"/>
        <dbReference type="ChEBI" id="CHEBI:58033"/>
        <dbReference type="EC" id="3.1.3.18"/>
    </reaction>
</comment>
<comment type="cofactor">
    <cofactor evidence="1">
        <name>Mg(2+)</name>
        <dbReference type="ChEBI" id="CHEBI:18420"/>
    </cofactor>
</comment>
<comment type="pathway">
    <text evidence="1">Organic acid metabolism; glycolate biosynthesis; glycolate from 2-phosphoglycolate: step 1/1.</text>
</comment>
<comment type="similarity">
    <text evidence="1">Belongs to the HAD-like hydrolase superfamily. CbbY/CbbZ/Gph/YieH family.</text>
</comment>
<gene>
    <name evidence="1" type="primary">gph</name>
    <name type="ordered locus">VP2805</name>
</gene>
<keyword id="KW-0119">Carbohydrate metabolism</keyword>
<keyword id="KW-0378">Hydrolase</keyword>
<keyword id="KW-0460">Magnesium</keyword>
<keyword id="KW-0479">Metal-binding</keyword>
<accession>Q87L12</accession>
<organism>
    <name type="scientific">Vibrio parahaemolyticus serotype O3:K6 (strain RIMD 2210633)</name>
    <dbReference type="NCBI Taxonomy" id="223926"/>
    <lineage>
        <taxon>Bacteria</taxon>
        <taxon>Pseudomonadati</taxon>
        <taxon>Pseudomonadota</taxon>
        <taxon>Gammaproteobacteria</taxon>
        <taxon>Vibrionales</taxon>
        <taxon>Vibrionaceae</taxon>
        <taxon>Vibrio</taxon>
    </lineage>
</organism>
<name>GPH_VIBPA</name>
<evidence type="ECO:0000255" key="1">
    <source>
        <dbReference type="HAMAP-Rule" id="MF_00495"/>
    </source>
</evidence>
<reference key="1">
    <citation type="journal article" date="2003" name="Lancet">
        <title>Genome sequence of Vibrio parahaemolyticus: a pathogenic mechanism distinct from that of V. cholerae.</title>
        <authorList>
            <person name="Makino K."/>
            <person name="Oshima K."/>
            <person name="Kurokawa K."/>
            <person name="Yokoyama K."/>
            <person name="Uda T."/>
            <person name="Tagomori K."/>
            <person name="Iijima Y."/>
            <person name="Najima M."/>
            <person name="Nakano M."/>
            <person name="Yamashita A."/>
            <person name="Kubota Y."/>
            <person name="Kimura S."/>
            <person name="Yasunaga T."/>
            <person name="Honda T."/>
            <person name="Shinagawa H."/>
            <person name="Hattori M."/>
            <person name="Iida T."/>
        </authorList>
    </citation>
    <scope>NUCLEOTIDE SEQUENCE [LARGE SCALE GENOMIC DNA]</scope>
    <source>
        <strain>RIMD 2210633</strain>
    </source>
</reference>
<proteinExistence type="inferred from homology"/>